<gene>
    <name type="ordered locus">Ecaj_0131</name>
</gene>
<feature type="chain" id="PRO_0000291085" description="UPF0434 protein Ecaj_0131">
    <location>
        <begin position="1"/>
        <end position="56"/>
    </location>
</feature>
<proteinExistence type="inferred from homology"/>
<protein>
    <recommendedName>
        <fullName evidence="1">UPF0434 protein Ecaj_0131</fullName>
    </recommendedName>
</protein>
<comment type="similarity">
    <text evidence="1">Belongs to the UPF0434 family.</text>
</comment>
<name>Y131_EHRCJ</name>
<evidence type="ECO:0000255" key="1">
    <source>
        <dbReference type="HAMAP-Rule" id="MF_01187"/>
    </source>
</evidence>
<accession>Q3YSX3</accession>
<organism>
    <name type="scientific">Ehrlichia canis (strain Jake)</name>
    <dbReference type="NCBI Taxonomy" id="269484"/>
    <lineage>
        <taxon>Bacteria</taxon>
        <taxon>Pseudomonadati</taxon>
        <taxon>Pseudomonadota</taxon>
        <taxon>Alphaproteobacteria</taxon>
        <taxon>Rickettsiales</taxon>
        <taxon>Anaplasmataceae</taxon>
        <taxon>Ehrlichia</taxon>
    </lineage>
</organism>
<dbReference type="EMBL" id="CP000107">
    <property type="protein sequence ID" value="AAZ68182.1"/>
    <property type="molecule type" value="Genomic_DNA"/>
</dbReference>
<dbReference type="RefSeq" id="WP_011304260.1">
    <property type="nucleotide sequence ID" value="NC_007354.1"/>
</dbReference>
<dbReference type="SMR" id="Q3YSX3"/>
<dbReference type="FunCoup" id="Q3YSX3">
    <property type="interactions" value="93"/>
</dbReference>
<dbReference type="KEGG" id="ecn:Ecaj_0131"/>
<dbReference type="eggNOG" id="COG2835">
    <property type="taxonomic scope" value="Bacteria"/>
</dbReference>
<dbReference type="HOGENOM" id="CLU_155659_3_1_5"/>
<dbReference type="InParanoid" id="Q3YSX3"/>
<dbReference type="Proteomes" id="UP000000435">
    <property type="component" value="Chromosome"/>
</dbReference>
<dbReference type="GO" id="GO:0005829">
    <property type="term" value="C:cytosol"/>
    <property type="evidence" value="ECO:0007669"/>
    <property type="project" value="TreeGrafter"/>
</dbReference>
<dbReference type="FunFam" id="2.20.25.10:FF:000002">
    <property type="entry name" value="UPF0434 protein YcaR"/>
    <property type="match status" value="1"/>
</dbReference>
<dbReference type="Gene3D" id="2.20.25.10">
    <property type="match status" value="1"/>
</dbReference>
<dbReference type="HAMAP" id="MF_01187">
    <property type="entry name" value="UPF0434"/>
    <property type="match status" value="1"/>
</dbReference>
<dbReference type="InterPro" id="IPR005651">
    <property type="entry name" value="Trm112-like"/>
</dbReference>
<dbReference type="PANTHER" id="PTHR33505:SF4">
    <property type="entry name" value="PROTEIN PREY, MITOCHONDRIAL"/>
    <property type="match status" value="1"/>
</dbReference>
<dbReference type="PANTHER" id="PTHR33505">
    <property type="entry name" value="ZGC:162634"/>
    <property type="match status" value="1"/>
</dbReference>
<dbReference type="Pfam" id="PF03966">
    <property type="entry name" value="Trm112p"/>
    <property type="match status" value="1"/>
</dbReference>
<dbReference type="SUPFAM" id="SSF158997">
    <property type="entry name" value="Trm112p-like"/>
    <property type="match status" value="1"/>
</dbReference>
<reference key="1">
    <citation type="journal article" date="2006" name="J. Bacteriol.">
        <title>The genome of the obligately intracellular bacterium Ehrlichia canis reveals themes of complex membrane structure and immune evasion strategies.</title>
        <authorList>
            <person name="Mavromatis K."/>
            <person name="Doyle C.K."/>
            <person name="Lykidis A."/>
            <person name="Ivanova N."/>
            <person name="Francino M.P."/>
            <person name="Chain P."/>
            <person name="Shin M."/>
            <person name="Malfatti S."/>
            <person name="Larimer F."/>
            <person name="Copeland A."/>
            <person name="Detter J.C."/>
            <person name="Land M."/>
            <person name="Richardson P.M."/>
            <person name="Yu X.J."/>
            <person name="Walker D.H."/>
            <person name="McBride J.W."/>
            <person name="Kyrpides N.C."/>
        </authorList>
    </citation>
    <scope>NUCLEOTIDE SEQUENCE [LARGE SCALE GENOMIC DNA]</scope>
    <source>
        <strain>Jake</strain>
    </source>
</reference>
<sequence length="56" mass="6503">MIDHRILEILVCPLTKDKLQYNKDTNELISQKAKLAFPIRDGIPIMLIDEARKLEP</sequence>